<feature type="chain" id="PRO_0000284315" description="Endoribonuclease YbeY">
    <location>
        <begin position="1"/>
        <end position="156"/>
    </location>
</feature>
<feature type="binding site" evidence="1">
    <location>
        <position position="114"/>
    </location>
    <ligand>
        <name>Zn(2+)</name>
        <dbReference type="ChEBI" id="CHEBI:29105"/>
        <note>catalytic</note>
    </ligand>
</feature>
<feature type="binding site" evidence="1">
    <location>
        <position position="118"/>
    </location>
    <ligand>
        <name>Zn(2+)</name>
        <dbReference type="ChEBI" id="CHEBI:29105"/>
        <note>catalytic</note>
    </ligand>
</feature>
<feature type="binding site" evidence="1">
    <location>
        <position position="124"/>
    </location>
    <ligand>
        <name>Zn(2+)</name>
        <dbReference type="ChEBI" id="CHEBI:29105"/>
        <note>catalytic</note>
    </ligand>
</feature>
<comment type="function">
    <text evidence="1">Single strand-specific metallo-endoribonuclease involved in late-stage 70S ribosome quality control and in maturation of the 3' terminus of the 16S rRNA.</text>
</comment>
<comment type="cofactor">
    <cofactor evidence="1">
        <name>Zn(2+)</name>
        <dbReference type="ChEBI" id="CHEBI:29105"/>
    </cofactor>
    <text evidence="1">Binds 1 zinc ion.</text>
</comment>
<comment type="subcellular location">
    <subcellularLocation>
        <location evidence="1">Cytoplasm</location>
    </subcellularLocation>
</comment>
<comment type="similarity">
    <text evidence="1">Belongs to the endoribonuclease YbeY family.</text>
</comment>
<reference key="1">
    <citation type="journal article" date="2006" name="Genome Res.">
        <title>Massive genome erosion and functional adaptations provide insights into the symbiotic lifestyle of Sodalis glossinidius in the tsetse host.</title>
        <authorList>
            <person name="Toh H."/>
            <person name="Weiss B.L."/>
            <person name="Perkin S.A.H."/>
            <person name="Yamashita A."/>
            <person name="Oshima K."/>
            <person name="Hattori M."/>
            <person name="Aksoy S."/>
        </authorList>
    </citation>
    <scope>NUCLEOTIDE SEQUENCE [LARGE SCALE GENOMIC DNA]</scope>
    <source>
        <strain>morsitans</strain>
    </source>
</reference>
<name>YBEY_SODGM</name>
<proteinExistence type="inferred from homology"/>
<organism>
    <name type="scientific">Sodalis glossinidius (strain morsitans)</name>
    <dbReference type="NCBI Taxonomy" id="343509"/>
    <lineage>
        <taxon>Bacteria</taxon>
        <taxon>Pseudomonadati</taxon>
        <taxon>Pseudomonadota</taxon>
        <taxon>Gammaproteobacteria</taxon>
        <taxon>Enterobacterales</taxon>
        <taxon>Bruguierivoracaceae</taxon>
        <taxon>Sodalis</taxon>
    </lineage>
</organism>
<evidence type="ECO:0000255" key="1">
    <source>
        <dbReference type="HAMAP-Rule" id="MF_00009"/>
    </source>
</evidence>
<keyword id="KW-0963">Cytoplasm</keyword>
<keyword id="KW-0255">Endonuclease</keyword>
<keyword id="KW-0378">Hydrolase</keyword>
<keyword id="KW-0479">Metal-binding</keyword>
<keyword id="KW-0540">Nuclease</keyword>
<keyword id="KW-0690">Ribosome biogenesis</keyword>
<keyword id="KW-0698">rRNA processing</keyword>
<keyword id="KW-0862">Zinc</keyword>
<sequence>MSDVILDLQLACDEARGLPAEADFLRWLQGVLPLFRDCAEVTVRLVDEAESHELNMTYRGKDRPTNVLSFPFEAPPEVELPLLGDLVICHQVVEREAQQQEKALEAHWAHMVVHGSLHLLGYDHIQDEEALEMESLETEIMQKLGYPDPYLAEKEA</sequence>
<gene>
    <name evidence="1" type="primary">ybeY</name>
    <name type="ordered locus">SG0809</name>
</gene>
<dbReference type="EC" id="3.1.-.-" evidence="1"/>
<dbReference type="EMBL" id="AP008232">
    <property type="protein sequence ID" value="BAE74084.1"/>
    <property type="molecule type" value="Genomic_DNA"/>
</dbReference>
<dbReference type="RefSeq" id="WP_011410672.1">
    <property type="nucleotide sequence ID" value="NC_007712.1"/>
</dbReference>
<dbReference type="SMR" id="Q2NUU1"/>
<dbReference type="STRING" id="343509.SG0809"/>
<dbReference type="KEGG" id="sgl:SG0809"/>
<dbReference type="eggNOG" id="COG0319">
    <property type="taxonomic scope" value="Bacteria"/>
</dbReference>
<dbReference type="HOGENOM" id="CLU_106710_0_1_6"/>
<dbReference type="OrthoDB" id="9807740at2"/>
<dbReference type="BioCyc" id="SGLO343509:SGP1_RS07110-MONOMER"/>
<dbReference type="Proteomes" id="UP000001932">
    <property type="component" value="Chromosome"/>
</dbReference>
<dbReference type="GO" id="GO:0005737">
    <property type="term" value="C:cytoplasm"/>
    <property type="evidence" value="ECO:0007669"/>
    <property type="project" value="UniProtKB-SubCell"/>
</dbReference>
<dbReference type="GO" id="GO:0004222">
    <property type="term" value="F:metalloendopeptidase activity"/>
    <property type="evidence" value="ECO:0007669"/>
    <property type="project" value="InterPro"/>
</dbReference>
<dbReference type="GO" id="GO:0004521">
    <property type="term" value="F:RNA endonuclease activity"/>
    <property type="evidence" value="ECO:0007669"/>
    <property type="project" value="UniProtKB-UniRule"/>
</dbReference>
<dbReference type="GO" id="GO:0008270">
    <property type="term" value="F:zinc ion binding"/>
    <property type="evidence" value="ECO:0007669"/>
    <property type="project" value="UniProtKB-UniRule"/>
</dbReference>
<dbReference type="GO" id="GO:0006364">
    <property type="term" value="P:rRNA processing"/>
    <property type="evidence" value="ECO:0007669"/>
    <property type="project" value="UniProtKB-UniRule"/>
</dbReference>
<dbReference type="Gene3D" id="3.40.390.30">
    <property type="entry name" value="Metalloproteases ('zincins'), catalytic domain"/>
    <property type="match status" value="1"/>
</dbReference>
<dbReference type="HAMAP" id="MF_00009">
    <property type="entry name" value="Endoribonucl_YbeY"/>
    <property type="match status" value="1"/>
</dbReference>
<dbReference type="InterPro" id="IPR023091">
    <property type="entry name" value="MetalPrtase_cat_dom_sf_prd"/>
</dbReference>
<dbReference type="InterPro" id="IPR002036">
    <property type="entry name" value="YbeY"/>
</dbReference>
<dbReference type="InterPro" id="IPR020549">
    <property type="entry name" value="YbeY_CS"/>
</dbReference>
<dbReference type="NCBIfam" id="TIGR00043">
    <property type="entry name" value="rRNA maturation RNase YbeY"/>
    <property type="match status" value="1"/>
</dbReference>
<dbReference type="PANTHER" id="PTHR46986">
    <property type="entry name" value="ENDORIBONUCLEASE YBEY, CHLOROPLASTIC"/>
    <property type="match status" value="1"/>
</dbReference>
<dbReference type="PANTHER" id="PTHR46986:SF1">
    <property type="entry name" value="ENDORIBONUCLEASE YBEY, CHLOROPLASTIC"/>
    <property type="match status" value="1"/>
</dbReference>
<dbReference type="Pfam" id="PF02130">
    <property type="entry name" value="YbeY"/>
    <property type="match status" value="1"/>
</dbReference>
<dbReference type="SUPFAM" id="SSF55486">
    <property type="entry name" value="Metalloproteases ('zincins'), catalytic domain"/>
    <property type="match status" value="1"/>
</dbReference>
<dbReference type="PROSITE" id="PS01306">
    <property type="entry name" value="UPF0054"/>
    <property type="match status" value="1"/>
</dbReference>
<protein>
    <recommendedName>
        <fullName evidence="1">Endoribonuclease YbeY</fullName>
        <ecNumber evidence="1">3.1.-.-</ecNumber>
    </recommendedName>
</protein>
<accession>Q2NUU1</accession>